<gene>
    <name evidence="1" type="primary">otnK</name>
    <name type="synonym">ygbK</name>
    <name type="ordered locus">b2737</name>
    <name type="ordered locus">JW2707</name>
</gene>
<keyword id="KW-0067">ATP-binding</keyword>
<keyword id="KW-0119">Carbohydrate metabolism</keyword>
<keyword id="KW-0418">Kinase</keyword>
<keyword id="KW-0547">Nucleotide-binding</keyword>
<keyword id="KW-1185">Reference proteome</keyword>
<keyword id="KW-0808">Transferase</keyword>
<name>OTNK_ECOLI</name>
<organism>
    <name type="scientific">Escherichia coli (strain K12)</name>
    <dbReference type="NCBI Taxonomy" id="83333"/>
    <lineage>
        <taxon>Bacteria</taxon>
        <taxon>Pseudomonadati</taxon>
        <taxon>Pseudomonadota</taxon>
        <taxon>Gammaproteobacteria</taxon>
        <taxon>Enterobacterales</taxon>
        <taxon>Enterobacteriaceae</taxon>
        <taxon>Escherichia</taxon>
    </lineage>
</organism>
<comment type="function">
    <text evidence="1">Catalyzes the ATP-dependent phosphorylation of 3-oxo-tetronate to 3-oxo-tetronate 4-phosphate.</text>
</comment>
<comment type="catalytic activity">
    <reaction evidence="1">
        <text>3-dehydro-L-erythronate + ATP = 3-dehydro-4-O-phospho-L-erythronate + ADP + H(+)</text>
        <dbReference type="Rhea" id="RHEA:52552"/>
        <dbReference type="ChEBI" id="CHEBI:15378"/>
        <dbReference type="ChEBI" id="CHEBI:30616"/>
        <dbReference type="ChEBI" id="CHEBI:136592"/>
        <dbReference type="ChEBI" id="CHEBI:136670"/>
        <dbReference type="ChEBI" id="CHEBI:456216"/>
        <dbReference type="EC" id="2.7.1.217"/>
    </reaction>
</comment>
<comment type="catalytic activity">
    <reaction evidence="1">
        <text>3-dehydro-D-erythronate + ATP = 3-dehydro-4-O-phospho-D-erythronate + ADP + H(+)</text>
        <dbReference type="Rhea" id="RHEA:52556"/>
        <dbReference type="ChEBI" id="CHEBI:15378"/>
        <dbReference type="ChEBI" id="CHEBI:30616"/>
        <dbReference type="ChEBI" id="CHEBI:57958"/>
        <dbReference type="ChEBI" id="CHEBI:136593"/>
        <dbReference type="ChEBI" id="CHEBI:456216"/>
        <dbReference type="EC" id="2.7.1.217"/>
    </reaction>
</comment>
<comment type="similarity">
    <text evidence="3">Belongs to the four-carbon acid sugar kinase family.</text>
</comment>
<feature type="chain" id="PRO_0000169313" description="3-oxo-tetronate kinase">
    <location>
        <begin position="1"/>
        <end position="388"/>
    </location>
</feature>
<feature type="binding site" evidence="2">
    <location>
        <position position="258"/>
    </location>
    <ligand>
        <name>ATP</name>
        <dbReference type="ChEBI" id="CHEBI:30616"/>
    </ligand>
</feature>
<feature type="binding site" evidence="2">
    <location>
        <begin position="360"/>
        <end position="363"/>
    </location>
    <ligand>
        <name>ATP</name>
        <dbReference type="ChEBI" id="CHEBI:30616"/>
    </ligand>
</feature>
<accession>Q46889</accession>
<accession>Q2MA92</accession>
<reference key="1">
    <citation type="journal article" date="1997" name="Science">
        <title>The complete genome sequence of Escherichia coli K-12.</title>
        <authorList>
            <person name="Blattner F.R."/>
            <person name="Plunkett G. III"/>
            <person name="Bloch C.A."/>
            <person name="Perna N.T."/>
            <person name="Burland V."/>
            <person name="Riley M."/>
            <person name="Collado-Vides J."/>
            <person name="Glasner J.D."/>
            <person name="Rode C.K."/>
            <person name="Mayhew G.F."/>
            <person name="Gregor J."/>
            <person name="Davis N.W."/>
            <person name="Kirkpatrick H.A."/>
            <person name="Goeden M.A."/>
            <person name="Rose D.J."/>
            <person name="Mau B."/>
            <person name="Shao Y."/>
        </authorList>
    </citation>
    <scope>NUCLEOTIDE SEQUENCE [LARGE SCALE GENOMIC DNA]</scope>
    <source>
        <strain>K12 / MG1655 / ATCC 47076</strain>
    </source>
</reference>
<reference key="2">
    <citation type="journal article" date="2006" name="Mol. Syst. Biol.">
        <title>Highly accurate genome sequences of Escherichia coli K-12 strains MG1655 and W3110.</title>
        <authorList>
            <person name="Hayashi K."/>
            <person name="Morooka N."/>
            <person name="Yamamoto Y."/>
            <person name="Fujita K."/>
            <person name="Isono K."/>
            <person name="Choi S."/>
            <person name="Ohtsubo E."/>
            <person name="Baba T."/>
            <person name="Wanner B.L."/>
            <person name="Mori H."/>
            <person name="Horiuchi T."/>
        </authorList>
    </citation>
    <scope>NUCLEOTIDE SEQUENCE [LARGE SCALE GENOMIC DNA]</scope>
    <source>
        <strain>K12 / W3110 / ATCC 27325 / DSM 5911</strain>
    </source>
</reference>
<protein>
    <recommendedName>
        <fullName evidence="1">3-oxo-tetronate kinase</fullName>
        <ecNumber evidence="1">2.7.1.217</ecNumber>
    </recommendedName>
    <alternativeName>
        <fullName evidence="3">3-dehydrotetronate 4-kinase</fullName>
    </alternativeName>
</protein>
<evidence type="ECO:0000250" key="1">
    <source>
        <dbReference type="UniProtKB" id="P44093"/>
    </source>
</evidence>
<evidence type="ECO:0000250" key="2">
    <source>
        <dbReference type="UniProtKB" id="Q0KBC8"/>
    </source>
</evidence>
<evidence type="ECO:0000305" key="3"/>
<dbReference type="EC" id="2.7.1.217" evidence="1"/>
<dbReference type="EMBL" id="U29579">
    <property type="protein sequence ID" value="AAA69247.1"/>
    <property type="molecule type" value="Genomic_DNA"/>
</dbReference>
<dbReference type="EMBL" id="U00096">
    <property type="protein sequence ID" value="AAC75779.1"/>
    <property type="molecule type" value="Genomic_DNA"/>
</dbReference>
<dbReference type="EMBL" id="AP009048">
    <property type="protein sequence ID" value="BAE76814.1"/>
    <property type="molecule type" value="Genomic_DNA"/>
</dbReference>
<dbReference type="PIR" id="E65054">
    <property type="entry name" value="E65054"/>
</dbReference>
<dbReference type="RefSeq" id="NP_417217.1">
    <property type="nucleotide sequence ID" value="NC_000913.3"/>
</dbReference>
<dbReference type="RefSeq" id="WP_001393459.1">
    <property type="nucleotide sequence ID" value="NZ_LN832404.1"/>
</dbReference>
<dbReference type="SMR" id="Q46889"/>
<dbReference type="BioGRID" id="4261444">
    <property type="interactions" value="22"/>
</dbReference>
<dbReference type="DIP" id="DIP-12112N"/>
<dbReference type="FunCoup" id="Q46889">
    <property type="interactions" value="32"/>
</dbReference>
<dbReference type="IntAct" id="Q46889">
    <property type="interactions" value="3"/>
</dbReference>
<dbReference type="STRING" id="511145.b2737"/>
<dbReference type="PaxDb" id="511145-b2737"/>
<dbReference type="DNASU" id="947199"/>
<dbReference type="EnsemblBacteria" id="AAC75779">
    <property type="protein sequence ID" value="AAC75779"/>
    <property type="gene ID" value="b2737"/>
</dbReference>
<dbReference type="GeneID" id="947199"/>
<dbReference type="KEGG" id="ecj:JW2707"/>
<dbReference type="KEGG" id="eco:b2737"/>
<dbReference type="KEGG" id="ecoc:C3026_15055"/>
<dbReference type="PATRIC" id="fig|511145.12.peg.2830"/>
<dbReference type="EchoBASE" id="EB2908"/>
<dbReference type="eggNOG" id="COG3395">
    <property type="taxonomic scope" value="Bacteria"/>
</dbReference>
<dbReference type="HOGENOM" id="CLU_029424_1_0_6"/>
<dbReference type="InParanoid" id="Q46889"/>
<dbReference type="OMA" id="CSVMTNK"/>
<dbReference type="OrthoDB" id="191465at2"/>
<dbReference type="PhylomeDB" id="Q46889"/>
<dbReference type="BioCyc" id="EcoCyc:G7418-MONOMER"/>
<dbReference type="PRO" id="PR:Q46889"/>
<dbReference type="Proteomes" id="UP000000625">
    <property type="component" value="Chromosome"/>
</dbReference>
<dbReference type="GO" id="GO:0005524">
    <property type="term" value="F:ATP binding"/>
    <property type="evidence" value="ECO:0007669"/>
    <property type="project" value="UniProtKB-KW"/>
</dbReference>
<dbReference type="GO" id="GO:0016301">
    <property type="term" value="F:kinase activity"/>
    <property type="evidence" value="ECO:0007669"/>
    <property type="project" value="UniProtKB-KW"/>
</dbReference>
<dbReference type="Gene3D" id="3.40.980.20">
    <property type="entry name" value="Four-carbon acid sugar kinase, nucleotide binding domain"/>
    <property type="match status" value="1"/>
</dbReference>
<dbReference type="Gene3D" id="3.40.50.10840">
    <property type="entry name" value="Putative sugar-binding, N-terminal domain"/>
    <property type="match status" value="1"/>
</dbReference>
<dbReference type="InterPro" id="IPR010737">
    <property type="entry name" value="4-carb_acid_sugar_kinase_N"/>
</dbReference>
<dbReference type="InterPro" id="IPR037051">
    <property type="entry name" value="4-carb_acid_sugar_kinase_N_sf"/>
</dbReference>
<dbReference type="InterPro" id="IPR031475">
    <property type="entry name" value="NBD_C"/>
</dbReference>
<dbReference type="InterPro" id="IPR042213">
    <property type="entry name" value="NBD_C_sf"/>
</dbReference>
<dbReference type="InterPro" id="IPR050007">
    <property type="entry name" value="OtnK"/>
</dbReference>
<dbReference type="NCBIfam" id="NF043035">
    <property type="entry name" value="OxoTetrKin"/>
    <property type="match status" value="1"/>
</dbReference>
<dbReference type="Pfam" id="PF17042">
    <property type="entry name" value="NBD_C"/>
    <property type="match status" value="1"/>
</dbReference>
<dbReference type="Pfam" id="PF07005">
    <property type="entry name" value="SBD_N"/>
    <property type="match status" value="1"/>
</dbReference>
<dbReference type="SUPFAM" id="SSF142764">
    <property type="entry name" value="YgbK-like"/>
    <property type="match status" value="1"/>
</dbReference>
<proteinExistence type="inferred from homology"/>
<sequence>MIKIGVIADDFTGATDIASFLVENGLPTVQINGVPTGKMPEAIDALVISLKTRSCPVVEATQQSLAALSWLQQQGCKQIYFKYCSTFDSTAKGNIGPVTDALMDALDTPFTVFSPALPVNGRTVYQGYLFVMNQLLAESGMRHHPVNPMTDSYLPRLVEAQSTGRCGVVSAHVFEQGVDAVRQELARLQQEGYRYAVLDALTEHHLEIQGEALRDAPLVTGGSGLAIGLARQWAQENGNQARKAGRPLAGRGVVLSGSCSQMTNRQVAHYRQIAPAREVDVARCLSIETLAAYAHELAEWVLGQESVLAPLVFATASTDALAAIQQQYGAQKASQAVETLFSQLAARLAAEGVTRFIVAGGETSGVVTQSLGIKGFHIGPTISPACRG</sequence>